<feature type="chain" id="PRO_1000136036" description="Ribosome rescue factor SmrB">
    <location>
        <begin position="1"/>
        <end position="183"/>
    </location>
</feature>
<feature type="domain" description="Smr" evidence="1">
    <location>
        <begin position="98"/>
        <end position="173"/>
    </location>
</feature>
<name>SMRB_ECO5E</name>
<comment type="function">
    <text evidence="1">Acts as a ribosome collision sensor. Detects stalled/collided disomes (pairs of ribosomes where the leading ribosome is stalled and a second ribosome has collided with it) and endonucleolytically cleaves mRNA at the 5' boundary of the stalled ribosome. Stalled/collided disomes form a new interface (primarily via the 30S subunits) that binds SmrB. Cleaved mRNA becomes available for tmRNA ligation, leading to ribosomal subunit dissociation and rescue of stalled ribosomes.</text>
</comment>
<comment type="subunit">
    <text evidence="1">Associates with collided ribosomes, but not with correctly translating polysomes.</text>
</comment>
<comment type="similarity">
    <text evidence="1">Belongs to the SmrB family.</text>
</comment>
<evidence type="ECO:0000255" key="1">
    <source>
        <dbReference type="HAMAP-Rule" id="MF_01042"/>
    </source>
</evidence>
<organism>
    <name type="scientific">Escherichia coli O157:H7 (strain EC4115 / EHEC)</name>
    <dbReference type="NCBI Taxonomy" id="444450"/>
    <lineage>
        <taxon>Bacteria</taxon>
        <taxon>Pseudomonadati</taxon>
        <taxon>Pseudomonadota</taxon>
        <taxon>Gammaproteobacteria</taxon>
        <taxon>Enterobacterales</taxon>
        <taxon>Enterobacteriaceae</taxon>
        <taxon>Escherichia</taxon>
    </lineage>
</organism>
<sequence>MKKKTTLSEEDQALFRQLMAGTRKIKQDTIVHRPQRKKVSEVPVKRLIQEQVDASHYFSDEFQPLLNADGPVKYVRPGVDHFEAKKLRRGDYSPELFLDLHGLTQLQAKQELGALIAACRREHVFCACVMHGHGKHILKQQTPLWLAQHPHVMAFHQAPKEYGGDAALLVLIEVEEWLPPELP</sequence>
<proteinExistence type="inferred from homology"/>
<keyword id="KW-0255">Endonuclease</keyword>
<keyword id="KW-0378">Hydrolase</keyword>
<keyword id="KW-0540">Nuclease</keyword>
<keyword id="KW-0694">RNA-binding</keyword>
<keyword id="KW-0699">rRNA-binding</keyword>
<protein>
    <recommendedName>
        <fullName evidence="1">Ribosome rescue factor SmrB</fullName>
        <ecNumber evidence="1">3.1.-.-</ecNumber>
    </recommendedName>
</protein>
<reference key="1">
    <citation type="journal article" date="2011" name="Proc. Natl. Acad. Sci. U.S.A.">
        <title>Genomic anatomy of Escherichia coli O157:H7 outbreaks.</title>
        <authorList>
            <person name="Eppinger M."/>
            <person name="Mammel M.K."/>
            <person name="Leclerc J.E."/>
            <person name="Ravel J."/>
            <person name="Cebula T.A."/>
        </authorList>
    </citation>
    <scope>NUCLEOTIDE SEQUENCE [LARGE SCALE GENOMIC DNA]</scope>
    <source>
        <strain>EC4115 / EHEC</strain>
    </source>
</reference>
<accession>B5YXX2</accession>
<dbReference type="EC" id="3.1.-.-" evidence="1"/>
<dbReference type="EMBL" id="CP001164">
    <property type="protein sequence ID" value="ACI38660.1"/>
    <property type="molecule type" value="Genomic_DNA"/>
</dbReference>
<dbReference type="RefSeq" id="WP_000730817.1">
    <property type="nucleotide sequence ID" value="NC_011353.1"/>
</dbReference>
<dbReference type="SMR" id="B5YXX2"/>
<dbReference type="KEGG" id="ecf:ECH74115_3472"/>
<dbReference type="HOGENOM" id="CLU_055978_4_0_6"/>
<dbReference type="GO" id="GO:0004521">
    <property type="term" value="F:RNA endonuclease activity"/>
    <property type="evidence" value="ECO:0007669"/>
    <property type="project" value="UniProtKB-UniRule"/>
</dbReference>
<dbReference type="GO" id="GO:0019843">
    <property type="term" value="F:rRNA binding"/>
    <property type="evidence" value="ECO:0007669"/>
    <property type="project" value="UniProtKB-UniRule"/>
</dbReference>
<dbReference type="GO" id="GO:0072344">
    <property type="term" value="P:rescue of stalled ribosome"/>
    <property type="evidence" value="ECO:0007669"/>
    <property type="project" value="UniProtKB-UniRule"/>
</dbReference>
<dbReference type="Gene3D" id="3.30.1370.110">
    <property type="match status" value="1"/>
</dbReference>
<dbReference type="HAMAP" id="MF_01042">
    <property type="entry name" value="SmrB"/>
    <property type="match status" value="1"/>
</dbReference>
<dbReference type="InterPro" id="IPR002625">
    <property type="entry name" value="Smr_dom"/>
</dbReference>
<dbReference type="InterPro" id="IPR036063">
    <property type="entry name" value="Smr_dom_sf"/>
</dbReference>
<dbReference type="InterPro" id="IPR022990">
    <property type="entry name" value="SmrB-like"/>
</dbReference>
<dbReference type="NCBIfam" id="NF003432">
    <property type="entry name" value="PRK04946.1"/>
    <property type="match status" value="1"/>
</dbReference>
<dbReference type="PANTHER" id="PTHR35562">
    <property type="entry name" value="DNA ENDONUCLEASE SMRA-RELATED"/>
    <property type="match status" value="1"/>
</dbReference>
<dbReference type="PANTHER" id="PTHR35562:SF1">
    <property type="entry name" value="UPF0115 PROTEIN YFCN"/>
    <property type="match status" value="1"/>
</dbReference>
<dbReference type="Pfam" id="PF01713">
    <property type="entry name" value="Smr"/>
    <property type="match status" value="1"/>
</dbReference>
<dbReference type="SMART" id="SM00463">
    <property type="entry name" value="SMR"/>
    <property type="match status" value="1"/>
</dbReference>
<dbReference type="SUPFAM" id="SSF160443">
    <property type="entry name" value="SMR domain-like"/>
    <property type="match status" value="1"/>
</dbReference>
<dbReference type="PROSITE" id="PS50828">
    <property type="entry name" value="SMR"/>
    <property type="match status" value="1"/>
</dbReference>
<gene>
    <name evidence="1" type="primary">smrB</name>
    <name type="ordered locus">ECH74115_3472</name>
</gene>